<reference key="1">
    <citation type="submission" date="2000-03" db="EMBL/GenBank/DDBJ databases">
        <title>cDNA clones (expressed sequence tags) from the free-living amitochondriate amoeboflagellate, Mastigamoeba balamuthi.</title>
        <authorList>
            <person name="Lee J.A."/>
            <person name="Moore D.V."/>
            <person name="Sensen C.W."/>
            <person name="Gaasterland T."/>
            <person name="Muller M."/>
        </authorList>
    </citation>
    <scope>NUCLEOTIDE SEQUENCE [GENOMIC DNA / MRNA]</scope>
    <source>
        <strain>ATCC 30984</strain>
    </source>
</reference>
<comment type="catalytic activity">
    <reaction evidence="2">
        <text>D-glyceraldehyde 3-phosphate + phosphate + NAD(+) = (2R)-3-phospho-glyceroyl phosphate + NADH + H(+)</text>
        <dbReference type="Rhea" id="RHEA:10300"/>
        <dbReference type="ChEBI" id="CHEBI:15378"/>
        <dbReference type="ChEBI" id="CHEBI:43474"/>
        <dbReference type="ChEBI" id="CHEBI:57540"/>
        <dbReference type="ChEBI" id="CHEBI:57604"/>
        <dbReference type="ChEBI" id="CHEBI:57945"/>
        <dbReference type="ChEBI" id="CHEBI:59776"/>
        <dbReference type="EC" id="1.2.1.12"/>
    </reaction>
</comment>
<comment type="pathway">
    <text>Carbohydrate degradation; glycolysis; pyruvate from D-glyceraldehyde 3-phosphate: step 1/5.</text>
</comment>
<comment type="subunit">
    <text evidence="1">Homotetramer.</text>
</comment>
<comment type="subcellular location">
    <subcellularLocation>
        <location evidence="1">Cytoplasm</location>
    </subcellularLocation>
</comment>
<comment type="similarity">
    <text evidence="3">Belongs to the glyceraldehyde-3-phosphate dehydrogenase family.</text>
</comment>
<organism>
    <name type="scientific">Mastigamoeba balamuthi</name>
    <name type="common">Phreatamoeba balamuthi</name>
    <dbReference type="NCBI Taxonomy" id="108607"/>
    <lineage>
        <taxon>Eukaryota</taxon>
        <taxon>Amoebozoa</taxon>
        <taxon>Evosea</taxon>
        <taxon>Archamoebae</taxon>
        <taxon>Mastigamoebida</taxon>
        <taxon>Mastigamoebidae</taxon>
        <taxon>Mastigamoeba</taxon>
    </lineage>
</organism>
<feature type="chain" id="PRO_0000145517" description="Glyceraldehyde-3-phosphate dehydrogenase">
    <location>
        <begin position="1"/>
        <end position="339"/>
    </location>
</feature>
<feature type="active site" description="Nucleophile" evidence="2">
    <location>
        <position position="156"/>
    </location>
</feature>
<feature type="binding site" evidence="1">
    <location>
        <begin position="12"/>
        <end position="13"/>
    </location>
    <ligand>
        <name>NAD(+)</name>
        <dbReference type="ChEBI" id="CHEBI:57540"/>
    </ligand>
</feature>
<feature type="binding site" evidence="1">
    <location>
        <position position="35"/>
    </location>
    <ligand>
        <name>NAD(+)</name>
        <dbReference type="ChEBI" id="CHEBI:57540"/>
    </ligand>
</feature>
<feature type="binding site" evidence="1">
    <location>
        <position position="84"/>
    </location>
    <ligand>
        <name>NAD(+)</name>
        <dbReference type="ChEBI" id="CHEBI:57540"/>
    </ligand>
</feature>
<feature type="binding site" evidence="1">
    <location>
        <begin position="155"/>
        <end position="157"/>
    </location>
    <ligand>
        <name>D-glyceraldehyde 3-phosphate</name>
        <dbReference type="ChEBI" id="CHEBI:59776"/>
    </ligand>
</feature>
<feature type="binding site" evidence="1">
    <location>
        <position position="186"/>
    </location>
    <ligand>
        <name>D-glyceraldehyde 3-phosphate</name>
        <dbReference type="ChEBI" id="CHEBI:59776"/>
    </ligand>
</feature>
<feature type="binding site" evidence="1">
    <location>
        <begin position="215"/>
        <end position="216"/>
    </location>
    <ligand>
        <name>D-glyceraldehyde 3-phosphate</name>
        <dbReference type="ChEBI" id="CHEBI:59776"/>
    </ligand>
</feature>
<feature type="binding site" evidence="1">
    <location>
        <position position="238"/>
    </location>
    <ligand>
        <name>D-glyceraldehyde 3-phosphate</name>
        <dbReference type="ChEBI" id="CHEBI:59776"/>
    </ligand>
</feature>
<feature type="binding site" evidence="1">
    <location>
        <position position="320"/>
    </location>
    <ligand>
        <name>NAD(+)</name>
        <dbReference type="ChEBI" id="CHEBI:57540"/>
    </ligand>
</feature>
<feature type="site" description="Activates thiol group during catalysis" evidence="1">
    <location>
        <position position="183"/>
    </location>
</feature>
<sequence length="339" mass="36184">MAARVGINGFGRIGRLVLRVLLSRGMPANVVLINDPFITTDAMAYIFKYDTVHGRFPGTVVGKEGKLEITLNGHVYDIAVSACKNPAEIPWGASNVEVVIESSGAFTTMEKAHLHQQGGAKKVLITAPSADAPMFVYGVNHQSLKADQTVFSNASCTTNCLAPLTKVINDKFGIVRGLMTTVHSTTATQKTVDGPSGKAWRDGRAAAGNIIPSSTGAAKAVTAVIPELKGRLTGMSFRVPTLNVSVVDLTAELKTPATYEEICNAVREAANGELKGVLGYTDEQVVSSDFVGEPMSSIFDAKAGIALDKTFVKLVSWYDNEWGYSNRVVDLLLHSLSLH</sequence>
<gene>
    <name type="primary">GAPD</name>
    <name type="synonym">GAPDH</name>
</gene>
<protein>
    <recommendedName>
        <fullName>Glyceraldehyde-3-phosphate dehydrogenase</fullName>
        <shortName>GAPDH</shortName>
        <ecNumber>1.2.1.12</ecNumber>
    </recommendedName>
</protein>
<accession>Q9N655</accession>
<dbReference type="EC" id="1.2.1.12"/>
<dbReference type="EMBL" id="AF246460">
    <property type="protein sequence ID" value="AAF70636.1"/>
    <property type="molecule type" value="mRNA"/>
</dbReference>
<dbReference type="EMBL" id="AF246461">
    <property type="protein sequence ID" value="AAF70637.1"/>
    <property type="molecule type" value="Genomic_DNA"/>
</dbReference>
<dbReference type="SMR" id="Q9N655"/>
<dbReference type="VEuPathDB" id="AmoebaDB:MBAL_002943"/>
<dbReference type="UniPathway" id="UPA00109">
    <property type="reaction ID" value="UER00184"/>
</dbReference>
<dbReference type="GO" id="GO:0005829">
    <property type="term" value="C:cytosol"/>
    <property type="evidence" value="ECO:0007669"/>
    <property type="project" value="TreeGrafter"/>
</dbReference>
<dbReference type="GO" id="GO:0004365">
    <property type="term" value="F:glyceraldehyde-3-phosphate dehydrogenase (NAD+) (phosphorylating) activity"/>
    <property type="evidence" value="ECO:0007669"/>
    <property type="project" value="UniProtKB-EC"/>
</dbReference>
<dbReference type="GO" id="GO:0051287">
    <property type="term" value="F:NAD binding"/>
    <property type="evidence" value="ECO:0007669"/>
    <property type="project" value="InterPro"/>
</dbReference>
<dbReference type="GO" id="GO:0050661">
    <property type="term" value="F:NADP binding"/>
    <property type="evidence" value="ECO:0007669"/>
    <property type="project" value="InterPro"/>
</dbReference>
<dbReference type="GO" id="GO:0006006">
    <property type="term" value="P:glucose metabolic process"/>
    <property type="evidence" value="ECO:0007669"/>
    <property type="project" value="InterPro"/>
</dbReference>
<dbReference type="GO" id="GO:0006096">
    <property type="term" value="P:glycolytic process"/>
    <property type="evidence" value="ECO:0007669"/>
    <property type="project" value="UniProtKB-UniPathway"/>
</dbReference>
<dbReference type="CDD" id="cd18126">
    <property type="entry name" value="GAPDH_I_C"/>
    <property type="match status" value="1"/>
</dbReference>
<dbReference type="CDD" id="cd05214">
    <property type="entry name" value="GAPDH_I_N"/>
    <property type="match status" value="1"/>
</dbReference>
<dbReference type="FunFam" id="3.30.360.10:FF:000001">
    <property type="entry name" value="Glyceraldehyde-3-phosphate dehydrogenase"/>
    <property type="match status" value="1"/>
</dbReference>
<dbReference type="FunFam" id="3.40.50.720:FF:000266">
    <property type="entry name" value="Glyceraldehyde-3-phosphate dehydrogenase"/>
    <property type="match status" value="1"/>
</dbReference>
<dbReference type="Gene3D" id="3.30.360.10">
    <property type="entry name" value="Dihydrodipicolinate Reductase, domain 2"/>
    <property type="match status" value="1"/>
</dbReference>
<dbReference type="Gene3D" id="3.40.50.720">
    <property type="entry name" value="NAD(P)-binding Rossmann-like Domain"/>
    <property type="match status" value="1"/>
</dbReference>
<dbReference type="InterPro" id="IPR020831">
    <property type="entry name" value="GlycerAld/Erythrose_P_DH"/>
</dbReference>
<dbReference type="InterPro" id="IPR020830">
    <property type="entry name" value="GlycerAld_3-P_DH_AS"/>
</dbReference>
<dbReference type="InterPro" id="IPR020829">
    <property type="entry name" value="GlycerAld_3-P_DH_cat"/>
</dbReference>
<dbReference type="InterPro" id="IPR020828">
    <property type="entry name" value="GlycerAld_3-P_DH_NAD(P)-bd"/>
</dbReference>
<dbReference type="InterPro" id="IPR006424">
    <property type="entry name" value="Glyceraldehyde-3-P_DH_1"/>
</dbReference>
<dbReference type="InterPro" id="IPR036291">
    <property type="entry name" value="NAD(P)-bd_dom_sf"/>
</dbReference>
<dbReference type="NCBIfam" id="TIGR01534">
    <property type="entry name" value="GAPDH-I"/>
    <property type="match status" value="1"/>
</dbReference>
<dbReference type="PANTHER" id="PTHR10836">
    <property type="entry name" value="GLYCERALDEHYDE 3-PHOSPHATE DEHYDROGENASE"/>
    <property type="match status" value="1"/>
</dbReference>
<dbReference type="PANTHER" id="PTHR10836:SF76">
    <property type="entry name" value="GLYCERALDEHYDE-3-PHOSPHATE DEHYDROGENASE-RELATED"/>
    <property type="match status" value="1"/>
</dbReference>
<dbReference type="Pfam" id="PF02800">
    <property type="entry name" value="Gp_dh_C"/>
    <property type="match status" value="1"/>
</dbReference>
<dbReference type="Pfam" id="PF00044">
    <property type="entry name" value="Gp_dh_N"/>
    <property type="match status" value="1"/>
</dbReference>
<dbReference type="PIRSF" id="PIRSF000149">
    <property type="entry name" value="GAP_DH"/>
    <property type="match status" value="1"/>
</dbReference>
<dbReference type="PRINTS" id="PR00078">
    <property type="entry name" value="G3PDHDRGNASE"/>
</dbReference>
<dbReference type="SMART" id="SM00846">
    <property type="entry name" value="Gp_dh_N"/>
    <property type="match status" value="1"/>
</dbReference>
<dbReference type="SUPFAM" id="SSF55347">
    <property type="entry name" value="Glyceraldehyde-3-phosphate dehydrogenase-like, C-terminal domain"/>
    <property type="match status" value="1"/>
</dbReference>
<dbReference type="SUPFAM" id="SSF51735">
    <property type="entry name" value="NAD(P)-binding Rossmann-fold domains"/>
    <property type="match status" value="1"/>
</dbReference>
<dbReference type="PROSITE" id="PS00071">
    <property type="entry name" value="GAPDH"/>
    <property type="match status" value="1"/>
</dbReference>
<proteinExistence type="evidence at transcript level"/>
<evidence type="ECO:0000250" key="1"/>
<evidence type="ECO:0000255" key="2">
    <source>
        <dbReference type="PROSITE-ProRule" id="PRU10009"/>
    </source>
</evidence>
<evidence type="ECO:0000305" key="3"/>
<keyword id="KW-0963">Cytoplasm</keyword>
<keyword id="KW-0324">Glycolysis</keyword>
<keyword id="KW-0520">NAD</keyword>
<keyword id="KW-0560">Oxidoreductase</keyword>
<name>G3P_MASBA</name>